<accession>A8GF82</accession>
<reference key="1">
    <citation type="submission" date="2007-09" db="EMBL/GenBank/DDBJ databases">
        <title>Complete sequence of chromosome of Serratia proteamaculans 568.</title>
        <authorList>
            <consortium name="US DOE Joint Genome Institute"/>
            <person name="Copeland A."/>
            <person name="Lucas S."/>
            <person name="Lapidus A."/>
            <person name="Barry K."/>
            <person name="Glavina del Rio T."/>
            <person name="Dalin E."/>
            <person name="Tice H."/>
            <person name="Pitluck S."/>
            <person name="Chain P."/>
            <person name="Malfatti S."/>
            <person name="Shin M."/>
            <person name="Vergez L."/>
            <person name="Schmutz J."/>
            <person name="Larimer F."/>
            <person name="Land M."/>
            <person name="Hauser L."/>
            <person name="Kyrpides N."/>
            <person name="Kim E."/>
            <person name="Taghavi S."/>
            <person name="Newman L."/>
            <person name="Vangronsveld J."/>
            <person name="van der Lelie D."/>
            <person name="Richardson P."/>
        </authorList>
    </citation>
    <scope>NUCLEOTIDE SEQUENCE [LARGE SCALE GENOMIC DNA]</scope>
    <source>
        <strain>568</strain>
    </source>
</reference>
<gene>
    <name evidence="1" type="primary">trpB</name>
    <name type="ordered locus">Spro_2671</name>
</gene>
<comment type="function">
    <text evidence="1">The beta subunit is responsible for the synthesis of L-tryptophan from indole and L-serine.</text>
</comment>
<comment type="catalytic activity">
    <reaction evidence="1">
        <text>(1S,2R)-1-C-(indol-3-yl)glycerol 3-phosphate + L-serine = D-glyceraldehyde 3-phosphate + L-tryptophan + H2O</text>
        <dbReference type="Rhea" id="RHEA:10532"/>
        <dbReference type="ChEBI" id="CHEBI:15377"/>
        <dbReference type="ChEBI" id="CHEBI:33384"/>
        <dbReference type="ChEBI" id="CHEBI:57912"/>
        <dbReference type="ChEBI" id="CHEBI:58866"/>
        <dbReference type="ChEBI" id="CHEBI:59776"/>
        <dbReference type="EC" id="4.2.1.20"/>
    </reaction>
</comment>
<comment type="cofactor">
    <cofactor evidence="1">
        <name>pyridoxal 5'-phosphate</name>
        <dbReference type="ChEBI" id="CHEBI:597326"/>
    </cofactor>
</comment>
<comment type="pathway">
    <text evidence="1">Amino-acid biosynthesis; L-tryptophan biosynthesis; L-tryptophan from chorismate: step 5/5.</text>
</comment>
<comment type="subunit">
    <text evidence="1">Tetramer of two alpha and two beta chains.</text>
</comment>
<comment type="similarity">
    <text evidence="1">Belongs to the TrpB family.</text>
</comment>
<feature type="chain" id="PRO_1000057865" description="Tryptophan synthase beta chain">
    <location>
        <begin position="1"/>
        <end position="396"/>
    </location>
</feature>
<feature type="modified residue" description="N6-(pyridoxal phosphate)lysine" evidence="1">
    <location>
        <position position="86"/>
    </location>
</feature>
<name>TRPB_SERP5</name>
<dbReference type="EC" id="4.2.1.20" evidence="1"/>
<dbReference type="EMBL" id="CP000826">
    <property type="protein sequence ID" value="ABV41772.1"/>
    <property type="molecule type" value="Genomic_DNA"/>
</dbReference>
<dbReference type="SMR" id="A8GF82"/>
<dbReference type="STRING" id="399741.Spro_2671"/>
<dbReference type="KEGG" id="spe:Spro_2671"/>
<dbReference type="eggNOG" id="COG0133">
    <property type="taxonomic scope" value="Bacteria"/>
</dbReference>
<dbReference type="HOGENOM" id="CLU_016734_3_1_6"/>
<dbReference type="OrthoDB" id="9766131at2"/>
<dbReference type="UniPathway" id="UPA00035">
    <property type="reaction ID" value="UER00044"/>
</dbReference>
<dbReference type="GO" id="GO:0005737">
    <property type="term" value="C:cytoplasm"/>
    <property type="evidence" value="ECO:0007669"/>
    <property type="project" value="TreeGrafter"/>
</dbReference>
<dbReference type="GO" id="GO:0004834">
    <property type="term" value="F:tryptophan synthase activity"/>
    <property type="evidence" value="ECO:0007669"/>
    <property type="project" value="UniProtKB-UniRule"/>
</dbReference>
<dbReference type="CDD" id="cd06446">
    <property type="entry name" value="Trp-synth_B"/>
    <property type="match status" value="1"/>
</dbReference>
<dbReference type="FunFam" id="3.40.50.1100:FF:000001">
    <property type="entry name" value="Tryptophan synthase beta chain"/>
    <property type="match status" value="1"/>
</dbReference>
<dbReference type="FunFam" id="3.40.50.1100:FF:000004">
    <property type="entry name" value="Tryptophan synthase beta chain"/>
    <property type="match status" value="1"/>
</dbReference>
<dbReference type="Gene3D" id="3.40.50.1100">
    <property type="match status" value="2"/>
</dbReference>
<dbReference type="HAMAP" id="MF_00133">
    <property type="entry name" value="Trp_synth_beta"/>
    <property type="match status" value="1"/>
</dbReference>
<dbReference type="InterPro" id="IPR006653">
    <property type="entry name" value="Trp_synth_b_CS"/>
</dbReference>
<dbReference type="InterPro" id="IPR006654">
    <property type="entry name" value="Trp_synth_beta"/>
</dbReference>
<dbReference type="InterPro" id="IPR023026">
    <property type="entry name" value="Trp_synth_beta/beta-like"/>
</dbReference>
<dbReference type="InterPro" id="IPR001926">
    <property type="entry name" value="TrpB-like_PALP"/>
</dbReference>
<dbReference type="InterPro" id="IPR036052">
    <property type="entry name" value="TrpB-like_PALP_sf"/>
</dbReference>
<dbReference type="NCBIfam" id="TIGR00263">
    <property type="entry name" value="trpB"/>
    <property type="match status" value="1"/>
</dbReference>
<dbReference type="PANTHER" id="PTHR48077:SF3">
    <property type="entry name" value="TRYPTOPHAN SYNTHASE"/>
    <property type="match status" value="1"/>
</dbReference>
<dbReference type="PANTHER" id="PTHR48077">
    <property type="entry name" value="TRYPTOPHAN SYNTHASE-RELATED"/>
    <property type="match status" value="1"/>
</dbReference>
<dbReference type="Pfam" id="PF00291">
    <property type="entry name" value="PALP"/>
    <property type="match status" value="1"/>
</dbReference>
<dbReference type="PIRSF" id="PIRSF001413">
    <property type="entry name" value="Trp_syn_beta"/>
    <property type="match status" value="1"/>
</dbReference>
<dbReference type="SUPFAM" id="SSF53686">
    <property type="entry name" value="Tryptophan synthase beta subunit-like PLP-dependent enzymes"/>
    <property type="match status" value="1"/>
</dbReference>
<dbReference type="PROSITE" id="PS00168">
    <property type="entry name" value="TRP_SYNTHASE_BETA"/>
    <property type="match status" value="1"/>
</dbReference>
<organism>
    <name type="scientific">Serratia proteamaculans (strain 568)</name>
    <dbReference type="NCBI Taxonomy" id="399741"/>
    <lineage>
        <taxon>Bacteria</taxon>
        <taxon>Pseudomonadati</taxon>
        <taxon>Pseudomonadota</taxon>
        <taxon>Gammaproteobacteria</taxon>
        <taxon>Enterobacterales</taxon>
        <taxon>Yersiniaceae</taxon>
        <taxon>Serratia</taxon>
    </lineage>
</organism>
<proteinExistence type="inferred from homology"/>
<protein>
    <recommendedName>
        <fullName evidence="1">Tryptophan synthase beta chain</fullName>
        <ecNumber evidence="1">4.2.1.20</ecNumber>
    </recommendedName>
</protein>
<evidence type="ECO:0000255" key="1">
    <source>
        <dbReference type="HAMAP-Rule" id="MF_00133"/>
    </source>
</evidence>
<sequence>MTLLNPYFGEFGGQYVPQILMPALKQLEEAFVSAQRDPEFQAEFIDLLKNYAGRPTALTLCRNLTAGTKTKLYLKREDLLHGGAHKTNQVLGQALLAKRMGKTEIIAETGAGQHGVASALACALLGLKCRIYMGAKDIERQSPNVFRMRLMGAEVIPVHSGSSTLKDACNEALRDWSGSYETAHYMLGTAAGPHPYPTIVREFQRMIGEETKAQMLEREGRLPDAVLACVGGGSNAIGMFADFIDDTSVGLIGVEPAGLGIETGQHGAPLKHGHVGIYFGMKAPMMQTSEGQIEESYSISAGLDFPSVGPQHAYLNSIGRAEYVSITDDEALDAFKALSRSEGIIPALESSHALAHALKMIRETPQKEQILVVNLSGRGDKDIFTVHDILKARGEI</sequence>
<keyword id="KW-0028">Amino-acid biosynthesis</keyword>
<keyword id="KW-0057">Aromatic amino acid biosynthesis</keyword>
<keyword id="KW-0456">Lyase</keyword>
<keyword id="KW-0663">Pyridoxal phosphate</keyword>
<keyword id="KW-0822">Tryptophan biosynthesis</keyword>